<comment type="function">
    <text evidence="4 5">Receptor for NPAF (A-18-F-amide) and NPFF (F-8-F-amide) neuropeptides, also known as morphine-modulating peptides. Can also be activated by a variety of naturally occurring or synthetic FMRF-amide like ligands. This receptor mediates its action by association with G proteins that activate a phosphatidylinositol-calcium second messenger system.</text>
</comment>
<comment type="subcellular location">
    <subcellularLocation>
        <location evidence="4">Cell membrane</location>
        <topology evidence="1">Multi-pass membrane protein</topology>
    </subcellularLocation>
</comment>
<comment type="tissue specificity">
    <text evidence="5">Expressed at high levels in the hypothalamus. Moderate levels found in the midbrain, thalamus, medulla oblongata, testis, eye, whole brain, cerebral cortex, striatum, hippocampus, cerebellum, optic nerve, placenta, spinal cord, pituitary gland and ovary.</text>
</comment>
<comment type="similarity">
    <text evidence="2">Belongs to the G-protein coupled receptor 1 family.</text>
</comment>
<accession>Q9EP86</accession>
<gene>
    <name type="primary">Npffr1</name>
    <name type="synonym">Gpr147</name>
    <name type="synonym">Npff1</name>
</gene>
<name>NPFF1_RAT</name>
<keyword id="KW-1003">Cell membrane</keyword>
<keyword id="KW-0903">Direct protein sequencing</keyword>
<keyword id="KW-1015">Disulfide bond</keyword>
<keyword id="KW-0297">G-protein coupled receptor</keyword>
<keyword id="KW-0325">Glycoprotein</keyword>
<keyword id="KW-0472">Membrane</keyword>
<keyword id="KW-0675">Receptor</keyword>
<keyword id="KW-1185">Reference proteome</keyword>
<keyword id="KW-0807">Transducer</keyword>
<keyword id="KW-0812">Transmembrane</keyword>
<keyword id="KW-1133">Transmembrane helix</keyword>
<organism>
    <name type="scientific">Rattus norvegicus</name>
    <name type="common">Rat</name>
    <dbReference type="NCBI Taxonomy" id="10116"/>
    <lineage>
        <taxon>Eukaryota</taxon>
        <taxon>Metazoa</taxon>
        <taxon>Chordata</taxon>
        <taxon>Craniata</taxon>
        <taxon>Vertebrata</taxon>
        <taxon>Euteleostomi</taxon>
        <taxon>Mammalia</taxon>
        <taxon>Eutheria</taxon>
        <taxon>Euarchontoglires</taxon>
        <taxon>Glires</taxon>
        <taxon>Rodentia</taxon>
        <taxon>Myomorpha</taxon>
        <taxon>Muroidea</taxon>
        <taxon>Muridae</taxon>
        <taxon>Murinae</taxon>
        <taxon>Rattus</taxon>
    </lineage>
</organism>
<dbReference type="EMBL" id="AB040103">
    <property type="protein sequence ID" value="BAB17676.1"/>
    <property type="molecule type" value="mRNA"/>
</dbReference>
<dbReference type="EMBL" id="AF268901">
    <property type="protein sequence ID" value="AAG41400.1"/>
    <property type="molecule type" value="mRNA"/>
</dbReference>
<dbReference type="SMR" id="Q9EP86"/>
<dbReference type="FunCoup" id="Q9EP86">
    <property type="interactions" value="82"/>
</dbReference>
<dbReference type="STRING" id="10116.ENSRNOP00000000675"/>
<dbReference type="BindingDB" id="Q9EP86"/>
<dbReference type="ChEMBL" id="CHEMBL4571"/>
<dbReference type="GlyCosmos" id="Q9EP86">
    <property type="glycosylation" value="4 sites, No reported glycans"/>
</dbReference>
<dbReference type="GlyGen" id="Q9EP86">
    <property type="glycosylation" value="4 sites"/>
</dbReference>
<dbReference type="PhosphoSitePlus" id="Q9EP86"/>
<dbReference type="PaxDb" id="10116-ENSRNOP00000000675"/>
<dbReference type="UCSC" id="RGD:621570">
    <property type="organism name" value="rat"/>
</dbReference>
<dbReference type="AGR" id="RGD:621570"/>
<dbReference type="RGD" id="621570">
    <property type="gene designation" value="Npffr1"/>
</dbReference>
<dbReference type="eggNOG" id="KOG3656">
    <property type="taxonomic scope" value="Eukaryota"/>
</dbReference>
<dbReference type="InParanoid" id="Q9EP86"/>
<dbReference type="PhylomeDB" id="Q9EP86"/>
<dbReference type="Reactome" id="R-RNO-389397">
    <property type="pathway name" value="Orexin and neuropeptides FF and QRFP bind to their respective receptors"/>
</dbReference>
<dbReference type="Reactome" id="R-RNO-416476">
    <property type="pathway name" value="G alpha (q) signalling events"/>
</dbReference>
<dbReference type="PRO" id="PR:Q9EP86"/>
<dbReference type="Proteomes" id="UP000002494">
    <property type="component" value="Unplaced"/>
</dbReference>
<dbReference type="GO" id="GO:0005929">
    <property type="term" value="C:cilium"/>
    <property type="evidence" value="ECO:0000266"/>
    <property type="project" value="RGD"/>
</dbReference>
<dbReference type="GO" id="GO:0005886">
    <property type="term" value="C:plasma membrane"/>
    <property type="evidence" value="ECO:0000266"/>
    <property type="project" value="RGD"/>
</dbReference>
<dbReference type="GO" id="GO:0004930">
    <property type="term" value="F:G protein-coupled receptor activity"/>
    <property type="evidence" value="ECO:0000318"/>
    <property type="project" value="GO_Central"/>
</dbReference>
<dbReference type="GO" id="GO:0008188">
    <property type="term" value="F:neuropeptide receptor activity"/>
    <property type="evidence" value="ECO:0000314"/>
    <property type="project" value="UniProtKB"/>
</dbReference>
<dbReference type="GO" id="GO:0032870">
    <property type="term" value="P:cellular response to hormone stimulus"/>
    <property type="evidence" value="ECO:0000318"/>
    <property type="project" value="GO_Central"/>
</dbReference>
<dbReference type="GO" id="GO:0007186">
    <property type="term" value="P:G protein-coupled receptor signaling pathway"/>
    <property type="evidence" value="ECO:0000318"/>
    <property type="project" value="GO_Central"/>
</dbReference>
<dbReference type="GO" id="GO:0007218">
    <property type="term" value="P:neuropeptide signaling pathway"/>
    <property type="evidence" value="ECO:0000314"/>
    <property type="project" value="UniProtKB"/>
</dbReference>
<dbReference type="CDD" id="cd15981">
    <property type="entry name" value="7tmA_NPFFR1"/>
    <property type="match status" value="1"/>
</dbReference>
<dbReference type="FunFam" id="1.20.1070.10:FF:000153">
    <property type="entry name" value="Neuropeptide FF receptor 1"/>
    <property type="match status" value="1"/>
</dbReference>
<dbReference type="Gene3D" id="1.20.1070.10">
    <property type="entry name" value="Rhodopsin 7-helix transmembrane proteins"/>
    <property type="match status" value="1"/>
</dbReference>
<dbReference type="InterPro" id="IPR000276">
    <property type="entry name" value="GPCR_Rhodpsn"/>
</dbReference>
<dbReference type="InterPro" id="IPR017452">
    <property type="entry name" value="GPCR_Rhodpsn_7TM"/>
</dbReference>
<dbReference type="InterPro" id="IPR005395">
    <property type="entry name" value="NPFF_rcpt"/>
</dbReference>
<dbReference type="InterPro" id="IPR005396">
    <property type="entry name" value="NPFF_rcpt_1"/>
</dbReference>
<dbReference type="PANTHER" id="PTHR24241:SF4">
    <property type="entry name" value="NEUROPEPTIDE FF RECEPTOR 1"/>
    <property type="match status" value="1"/>
</dbReference>
<dbReference type="PANTHER" id="PTHR24241">
    <property type="entry name" value="NEUROPEPTIDE RECEPTOR-RELATED G-PROTEIN COUPLED RECEPTOR"/>
    <property type="match status" value="1"/>
</dbReference>
<dbReference type="Pfam" id="PF00001">
    <property type="entry name" value="7tm_1"/>
    <property type="match status" value="1"/>
</dbReference>
<dbReference type="PRINTS" id="PR00237">
    <property type="entry name" value="GPCRRHODOPSN"/>
</dbReference>
<dbReference type="PRINTS" id="PR01570">
    <property type="entry name" value="NPFFRECEPTOR"/>
</dbReference>
<dbReference type="PRINTS" id="PR01571">
    <property type="entry name" value="NPFFRECEPTR1"/>
</dbReference>
<dbReference type="SMART" id="SM01381">
    <property type="entry name" value="7TM_GPCR_Srsx"/>
    <property type="match status" value="1"/>
</dbReference>
<dbReference type="SUPFAM" id="SSF81321">
    <property type="entry name" value="Family A G protein-coupled receptor-like"/>
    <property type="match status" value="1"/>
</dbReference>
<dbReference type="PROSITE" id="PS00237">
    <property type="entry name" value="G_PROTEIN_RECEP_F1_1"/>
    <property type="match status" value="1"/>
</dbReference>
<dbReference type="PROSITE" id="PS50262">
    <property type="entry name" value="G_PROTEIN_RECEP_F1_2"/>
    <property type="match status" value="1"/>
</dbReference>
<evidence type="ECO:0000255" key="1"/>
<evidence type="ECO:0000255" key="2">
    <source>
        <dbReference type="PROSITE-ProRule" id="PRU00521"/>
    </source>
</evidence>
<evidence type="ECO:0000256" key="3">
    <source>
        <dbReference type="SAM" id="MobiDB-lite"/>
    </source>
</evidence>
<evidence type="ECO:0000269" key="4">
    <source>
    </source>
</evidence>
<evidence type="ECO:0000269" key="5">
    <source>
    </source>
</evidence>
<sequence length="432" mass="48324">MEAEPSQPPNGSWPLGQNGSDVETSMATSLTFSSYYQHSSPVAAMFIAAYVLIFLLCMVGNTLVCFIVLKNRHMRTVTNMFILNLAVSDLLVGIFCMPTTLVDNLITGWPFDNATCKMSGLVQGMSVSASVFTLVAIAVERFRCIVHPFREKLTLRKALFTIAVIWALALLIMCPSAVTLTVTREEHHFMLDARNRSYPLYSCWEAWPEKGMRKVYTAVLFAHIYLVPLALIVVMYVRIARKLCQAPGPARDTEEAVAEGGRTSRRRARVVHMLVMVALFFTLSWLPLWVLLLLIDYGELSELQLHLLSVYAFPLAHWLAFFHSSANPIIYGYFNENFRRGFQAAFRAQLCWPPWAAHKQAYSERPNRLLRRRVVVDVQPSDSGLPSESGPSSGVPGPGRLPLRNGRVAHQDGPGEGPGCNHMPLTIPAWNI</sequence>
<protein>
    <recommendedName>
        <fullName>Neuropeptide FF receptor 1</fullName>
    </recommendedName>
    <alternativeName>
        <fullName>G-protein coupled receptor 147</fullName>
    </alternativeName>
    <alternativeName>
        <fullName>RFamide-related peptide receptor OT7T022</fullName>
    </alternativeName>
</protein>
<proteinExistence type="evidence at protein level"/>
<reference key="1">
    <citation type="journal article" date="2000" name="Nat. Cell Biol.">
        <title>New neuropeptides containing carboxy-terminal RFamide and their receptor in mammals.</title>
        <authorList>
            <person name="Hinuma S."/>
            <person name="Shintani Y."/>
            <person name="Fukusumi S."/>
            <person name="Iijima N."/>
            <person name="Matsumoto Y."/>
            <person name="Hosoya M."/>
            <person name="Fujii R."/>
            <person name="Watanabe T."/>
            <person name="Kikuchi K."/>
            <person name="Terao Y."/>
            <person name="Yano T."/>
            <person name="Yamamoto T."/>
            <person name="Kawamata Y."/>
            <person name="Habata Y."/>
            <person name="Asada M."/>
            <person name="Kitada C."/>
            <person name="Kurokawa T."/>
            <person name="Onda H."/>
            <person name="Nishimura O."/>
            <person name="Tanaka M."/>
            <person name="Ibata Y."/>
            <person name="Fujino M."/>
        </authorList>
    </citation>
    <scope>NUCLEOTIDE SEQUENCE [MRNA]</scope>
    <scope>TISSUE SPECIFICITY</scope>
    <scope>FUNCTION</scope>
    <source>
        <tissue>Brain stem</tissue>
    </source>
</reference>
<reference key="2">
    <citation type="journal article" date="2000" name="J. Biol. Chem.">
        <title>Identification and characterization of two G protein-coupled receptors for neuropeptide FF.</title>
        <authorList>
            <person name="Bonini J.A."/>
            <person name="Jones K.A."/>
            <person name="Adham N."/>
            <person name="Forray C."/>
            <person name="Artymyshyn R."/>
            <person name="Durkin M.M."/>
            <person name="Smith K.E."/>
            <person name="Tamm J.A."/>
            <person name="Boteju L.W."/>
            <person name="Lakhlani P.P."/>
            <person name="Raddatz R."/>
            <person name="Yao W.-J."/>
            <person name="Ogozalek K.L."/>
            <person name="Boyle N."/>
            <person name="Kouranova E.V."/>
            <person name="Quan Y."/>
            <person name="Vaysse P.J."/>
            <person name="Wetzel J.M."/>
            <person name="Branchek T.A."/>
            <person name="Gerald C."/>
            <person name="Borowsky B."/>
        </authorList>
    </citation>
    <scope>NUCLEOTIDE SEQUENCE [MRNA]</scope>
    <scope>FUNCTION</scope>
    <scope>SUBCELLULAR LOCATION</scope>
    <source>
        <strain>Sprague-Dawley</strain>
        <tissue>Hypothalamus</tissue>
    </source>
</reference>
<reference key="3">
    <citation type="submission" date="2007-07" db="UniProtKB">
        <authorList>
            <person name="Lubec G."/>
            <person name="Kang S.U."/>
        </authorList>
    </citation>
    <scope>PROTEIN SEQUENCE OF 185-194</scope>
    <scope>IDENTIFICATION BY MASS SPECTROMETRY</scope>
    <source>
        <strain>Sprague-Dawley</strain>
        <tissue>Brain</tissue>
    </source>
</reference>
<feature type="chain" id="PRO_0000069914" description="Neuropeptide FF receptor 1">
    <location>
        <begin position="1"/>
        <end position="432"/>
    </location>
</feature>
<feature type="topological domain" description="Extracellular" evidence="1">
    <location>
        <begin position="1"/>
        <end position="43"/>
    </location>
</feature>
<feature type="transmembrane region" description="Helical; Name=1" evidence="1">
    <location>
        <begin position="44"/>
        <end position="64"/>
    </location>
</feature>
<feature type="topological domain" description="Cytoplasmic" evidence="1">
    <location>
        <begin position="65"/>
        <end position="80"/>
    </location>
</feature>
<feature type="transmembrane region" description="Helical; Name=2" evidence="1">
    <location>
        <begin position="81"/>
        <end position="101"/>
    </location>
</feature>
<feature type="topological domain" description="Extracellular" evidence="1">
    <location>
        <begin position="102"/>
        <end position="117"/>
    </location>
</feature>
<feature type="transmembrane region" description="Helical; Name=3" evidence="1">
    <location>
        <begin position="118"/>
        <end position="138"/>
    </location>
</feature>
<feature type="topological domain" description="Cytoplasmic" evidence="1">
    <location>
        <begin position="139"/>
        <end position="158"/>
    </location>
</feature>
<feature type="transmembrane region" description="Helical; Name=4" evidence="1">
    <location>
        <begin position="159"/>
        <end position="179"/>
    </location>
</feature>
<feature type="topological domain" description="Extracellular" evidence="1">
    <location>
        <begin position="180"/>
        <end position="214"/>
    </location>
</feature>
<feature type="transmembrane region" description="Helical; Name=5" evidence="1">
    <location>
        <begin position="215"/>
        <end position="235"/>
    </location>
</feature>
<feature type="topological domain" description="Cytoplasmic" evidence="1">
    <location>
        <begin position="236"/>
        <end position="273"/>
    </location>
</feature>
<feature type="transmembrane region" description="Helical; Name=6" evidence="1">
    <location>
        <begin position="274"/>
        <end position="294"/>
    </location>
</feature>
<feature type="topological domain" description="Extracellular" evidence="1">
    <location>
        <begin position="295"/>
        <end position="309"/>
    </location>
</feature>
<feature type="transmembrane region" description="Helical; Name=7" evidence="1">
    <location>
        <begin position="310"/>
        <end position="330"/>
    </location>
</feature>
<feature type="topological domain" description="Cytoplasmic" evidence="1">
    <location>
        <begin position="331"/>
        <end position="432"/>
    </location>
</feature>
<feature type="region of interest" description="Disordered" evidence="3">
    <location>
        <begin position="380"/>
        <end position="422"/>
    </location>
</feature>
<feature type="compositionally biased region" description="Low complexity" evidence="3">
    <location>
        <begin position="380"/>
        <end position="406"/>
    </location>
</feature>
<feature type="glycosylation site" description="N-linked (GlcNAc...) asparagine" evidence="1">
    <location>
        <position position="10"/>
    </location>
</feature>
<feature type="glycosylation site" description="N-linked (GlcNAc...) asparagine" evidence="1">
    <location>
        <position position="18"/>
    </location>
</feature>
<feature type="glycosylation site" description="N-linked (GlcNAc...) asparagine" evidence="1">
    <location>
        <position position="113"/>
    </location>
</feature>
<feature type="glycosylation site" description="N-linked (GlcNAc...) asparagine" evidence="1">
    <location>
        <position position="195"/>
    </location>
</feature>
<feature type="disulfide bond" evidence="2">
    <location>
        <begin position="116"/>
        <end position="203"/>
    </location>
</feature>